<organism>
    <name type="scientific">Escherichia coli (strain K12)</name>
    <dbReference type="NCBI Taxonomy" id="83333"/>
    <lineage>
        <taxon>Bacteria</taxon>
        <taxon>Pseudomonadati</taxon>
        <taxon>Pseudomonadota</taxon>
        <taxon>Gammaproteobacteria</taxon>
        <taxon>Enterobacterales</taxon>
        <taxon>Enterobacteriaceae</taxon>
        <taxon>Escherichia</taxon>
    </lineage>
</organism>
<accession>P52095</accession>
<accession>P78299</accession>
<keyword id="KW-0002">3D-structure</keyword>
<keyword id="KW-0210">Decarboxylase</keyword>
<keyword id="KW-0903">Direct protein sequencing</keyword>
<keyword id="KW-0456">Lyase</keyword>
<keyword id="KW-0663">Pyridoxal phosphate</keyword>
<keyword id="KW-1185">Reference proteome</keyword>
<feature type="chain" id="PRO_0000201142" description="Constitutive lysine decarboxylase">
    <location>
        <begin position="1"/>
        <end position="713"/>
    </location>
</feature>
<feature type="modified residue" description="N6-(pyridoxal phosphate)lysine">
    <location>
        <position position="367"/>
    </location>
</feature>
<feature type="sequence conflict" description="In Ref. 2; AA sequence." evidence="4" ref="2">
    <original>S</original>
    <variation>T</variation>
    <location>
        <position position="284"/>
    </location>
</feature>
<feature type="sequence conflict" description="In Ref. 2; AA sequence." evidence="4" ref="2">
    <original>N</original>
    <variation>F</variation>
    <location>
        <position position="314"/>
    </location>
</feature>
<feature type="sequence conflict" description="In Ref. 2; AA sequence." evidence="4" ref="2">
    <original>T</original>
    <variation>S</variation>
    <location>
        <position position="411"/>
    </location>
</feature>
<feature type="sequence conflict" description="In Ref. 2; AA sequence." evidence="4" ref="2">
    <original>AA</original>
    <variation>R</variation>
    <location>
        <begin position="413"/>
        <end position="414"/>
    </location>
</feature>
<feature type="sequence conflict" description="In Ref. 2; AA sequence." evidence="4" ref="2">
    <original>M</original>
    <variation>I</variation>
    <location>
        <position position="498"/>
    </location>
</feature>
<feature type="sequence conflict" description="In Ref. 2; AA sequence." evidence="4" ref="2">
    <original>L</original>
    <variation>I</variation>
    <location>
        <position position="673"/>
    </location>
</feature>
<sequence length="713" mass="80590">MNIIAIMGPHGVFYKDEPIKELESALVAQGFQIIWPQNSVDLLKFIEHNPRICGVIFDWDEYSLDLCSDINQLNEYLPLYAFINTHSTMDVSVQDMRMALWFFEYALGQAEDIAIRMRQYTDEYLDNITPPFTKALFTYVKERKYTFCTPGHMGGTAYQKSPVGCLFYDFFGGNTLKADVSISVTELGSLLDHTGPHLEAEEYIARTFGAEQSYIVTNGTSTSNKIVGMYAAPSGSTLLIDRNCHKSLAHLLMMNDVVPVWLKPTRNALGILGGIPRREFTRDSIEEKVAATTQAQWPVHAVITNSTYDGLLYNTDWIKQTLDVPSIHFDSAWVPYTHFHPIYQGKSGMSGERVAGKVIFETQSTHKMLAALSQASLIHIKGEYDEEAFNEAFMMHTTTSPSYPIVASVETAAAMLRGNPGKRLINRSVERALHFRKEVQRLREESDGWFFDIWQPPQVDEAECWPVAPGEQWHGFNDADADHMFLDPVKVTILTPGMDEQGNMSEEGIPAALVAKFLDERGIVVEKTGPYNLLFLFSIGIDKTKAMGLLRGLTEFKRSYDLNLRIKNMLPDLYAEDPDFYRNMRIQDLAQGIHKLIRKHDLPGLMLRAFDTLPEMIMTPHQAWQRQIKGEVETIALEQLVGRVSANMILPYPPGVPLLMPGEMLTKESRTVLDFLLMLCSVGQHYPGFETDIHGAKQDEDGVYRVRVLKMAG</sequence>
<comment type="function">
    <text evidence="2">Plays a role in lysine utilization by acting as a lysine decarboxylase.</text>
</comment>
<comment type="catalytic activity">
    <reaction evidence="2">
        <text>L-lysine + H(+) = cadaverine + CO2</text>
        <dbReference type="Rhea" id="RHEA:22352"/>
        <dbReference type="ChEBI" id="CHEBI:15378"/>
        <dbReference type="ChEBI" id="CHEBI:16526"/>
        <dbReference type="ChEBI" id="CHEBI:32551"/>
        <dbReference type="ChEBI" id="CHEBI:58384"/>
        <dbReference type="EC" id="4.1.1.18"/>
    </reaction>
</comment>
<comment type="cofactor">
    <cofactor>
        <name>pyridoxal 5'-phosphate</name>
        <dbReference type="ChEBI" id="CHEBI:597326"/>
    </cofactor>
</comment>
<comment type="biophysicochemical properties">
    <phDependence>
        <text>Optimum pH is 6.2-8.0.</text>
    </phDependence>
</comment>
<comment type="subunit">
    <text evidence="1">Homodecamer; built of five dimers associated in a 5-fold symmetrical double-ring.</text>
</comment>
<comment type="interaction">
    <interactant intactId="EBI-545944">
        <id>P52095</id>
    </interactant>
    <interactant intactId="EBI-545922">
        <id>P0A9H3</id>
        <label>cadA</label>
    </interactant>
    <organismsDiffer>false</organismsDiffer>
    <experiments>5</experiments>
</comment>
<comment type="induction">
    <text evidence="3">By RpoS-dependent mechanism on stationary phase on the contrary to the second lysine decarboxylase CadA which is not induced by RpoS.</text>
</comment>
<comment type="similarity">
    <text evidence="4">Belongs to the Orn/Lys/Arg decarboxylase class-I family.</text>
</comment>
<gene>
    <name type="primary">ldcC</name>
    <name type="synonym">ldc</name>
    <name type="synonym">ldcH</name>
    <name type="ordered locus">b0186</name>
    <name type="ordered locus">JW0181</name>
</gene>
<protein>
    <recommendedName>
        <fullName>Constitutive lysine decarboxylase</fullName>
        <shortName>LDCC</shortName>
        <ecNumber evidence="2">4.1.1.18</ecNumber>
    </recommendedName>
</protein>
<dbReference type="EC" id="4.1.1.18" evidence="2"/>
<dbReference type="EMBL" id="D87518">
    <property type="protein sequence ID" value="BAA21656.1"/>
    <property type="molecule type" value="Genomic_DNA"/>
</dbReference>
<dbReference type="EMBL" id="D49445">
    <property type="protein sequence ID" value="BAA08426.1"/>
    <property type="molecule type" value="Genomic_DNA"/>
</dbReference>
<dbReference type="EMBL" id="U70214">
    <property type="protein sequence ID" value="AAB08615.1"/>
    <property type="molecule type" value="Genomic_DNA"/>
</dbReference>
<dbReference type="EMBL" id="U00096">
    <property type="protein sequence ID" value="AAC73297.1"/>
    <property type="molecule type" value="Genomic_DNA"/>
</dbReference>
<dbReference type="EMBL" id="AP009048">
    <property type="protein sequence ID" value="BAA77861.2"/>
    <property type="molecule type" value="Genomic_DNA"/>
</dbReference>
<dbReference type="EMBL" id="Z50870">
    <property type="protein sequence ID" value="CAA90749.1"/>
    <property type="molecule type" value="Genomic_DNA"/>
</dbReference>
<dbReference type="PIR" id="B64743">
    <property type="entry name" value="B64743"/>
</dbReference>
<dbReference type="RefSeq" id="NP_414728.1">
    <property type="nucleotide sequence ID" value="NC_000913.3"/>
</dbReference>
<dbReference type="RefSeq" id="WP_001020973.1">
    <property type="nucleotide sequence ID" value="NZ_STEB01000032.1"/>
</dbReference>
<dbReference type="PDB" id="5FKZ">
    <property type="method" value="EM"/>
    <property type="resolution" value="5.50 A"/>
    <property type="chains" value="E=1-710"/>
</dbReference>
<dbReference type="PDBsum" id="5FKZ"/>
<dbReference type="EMDB" id="EMD-3205"/>
<dbReference type="SMR" id="P52095"/>
<dbReference type="BioGRID" id="4259757">
    <property type="interactions" value="12"/>
</dbReference>
<dbReference type="DIP" id="DIP-10086N"/>
<dbReference type="FunCoup" id="P52095">
    <property type="interactions" value="104"/>
</dbReference>
<dbReference type="IntAct" id="P52095">
    <property type="interactions" value="5"/>
</dbReference>
<dbReference type="STRING" id="511145.b0186"/>
<dbReference type="jPOST" id="P52095"/>
<dbReference type="PaxDb" id="511145-b0186"/>
<dbReference type="EnsemblBacteria" id="AAC73297">
    <property type="protein sequence ID" value="AAC73297"/>
    <property type="gene ID" value="b0186"/>
</dbReference>
<dbReference type="GeneID" id="944887"/>
<dbReference type="KEGG" id="ecj:JW0181"/>
<dbReference type="KEGG" id="eco:b0186"/>
<dbReference type="KEGG" id="ecoc:C3026_00855"/>
<dbReference type="PATRIC" id="fig|1411691.4.peg.2093"/>
<dbReference type="EchoBASE" id="EB3010"/>
<dbReference type="eggNOG" id="COG1982">
    <property type="taxonomic scope" value="Bacteria"/>
</dbReference>
<dbReference type="InParanoid" id="P52095"/>
<dbReference type="OMA" id="MMEAPGG"/>
<dbReference type="OrthoDB" id="9761189at2"/>
<dbReference type="PhylomeDB" id="P52095"/>
<dbReference type="BioCyc" id="EcoCyc:LDC2-MONOMER"/>
<dbReference type="BioCyc" id="MetaCyc:LDC2-MONOMER"/>
<dbReference type="BRENDA" id="4.1.1.18">
    <property type="organism ID" value="2026"/>
</dbReference>
<dbReference type="PRO" id="PR:P52095"/>
<dbReference type="Proteomes" id="UP000000625">
    <property type="component" value="Chromosome"/>
</dbReference>
<dbReference type="GO" id="GO:0005737">
    <property type="term" value="C:cytoplasm"/>
    <property type="evidence" value="ECO:0007669"/>
    <property type="project" value="InterPro"/>
</dbReference>
<dbReference type="GO" id="GO:0042802">
    <property type="term" value="F:identical protein binding"/>
    <property type="evidence" value="ECO:0000314"/>
    <property type="project" value="EcoCyc"/>
</dbReference>
<dbReference type="GO" id="GO:0008923">
    <property type="term" value="F:lysine decarboxylase activity"/>
    <property type="evidence" value="ECO:0000314"/>
    <property type="project" value="EcoCyc"/>
</dbReference>
<dbReference type="GO" id="GO:0006554">
    <property type="term" value="P:lysine catabolic process"/>
    <property type="evidence" value="ECO:0000314"/>
    <property type="project" value="EcoliWiki"/>
</dbReference>
<dbReference type="CDD" id="cd00615">
    <property type="entry name" value="Orn_deC_like"/>
    <property type="match status" value="1"/>
</dbReference>
<dbReference type="FunFam" id="3.40.50.2300:FF:000084">
    <property type="entry name" value="Lysine decarboxylase, inducible"/>
    <property type="match status" value="1"/>
</dbReference>
<dbReference type="FunFam" id="3.40.640.10:FF:000008">
    <property type="entry name" value="Lysine decarboxylase, inducible"/>
    <property type="match status" value="1"/>
</dbReference>
<dbReference type="FunFam" id="3.90.100.10:FF:000001">
    <property type="entry name" value="Lysine decarboxylase, inducible"/>
    <property type="match status" value="1"/>
</dbReference>
<dbReference type="FunFam" id="3.90.1150.10:FF:000016">
    <property type="entry name" value="Lysine decarboxylase, inducible"/>
    <property type="match status" value="1"/>
</dbReference>
<dbReference type="Gene3D" id="3.40.50.2300">
    <property type="match status" value="1"/>
</dbReference>
<dbReference type="Gene3D" id="3.90.1150.10">
    <property type="entry name" value="Aspartate Aminotransferase, domain 1"/>
    <property type="match status" value="1"/>
</dbReference>
<dbReference type="Gene3D" id="3.90.100.10">
    <property type="entry name" value="Orn/Lys/Arg decarboxylase, C-terminal domain"/>
    <property type="match status" value="1"/>
</dbReference>
<dbReference type="Gene3D" id="3.40.640.10">
    <property type="entry name" value="Type I PLP-dependent aspartate aminotransferase-like (Major domain)"/>
    <property type="match status" value="1"/>
</dbReference>
<dbReference type="InterPro" id="IPR005308">
    <property type="entry name" value="OKR_de-COase_N"/>
</dbReference>
<dbReference type="InterPro" id="IPR011193">
    <property type="entry name" value="Orn/lys/arg_de-COase"/>
</dbReference>
<dbReference type="InterPro" id="IPR000310">
    <property type="entry name" value="Orn/Lys/Arg_deCO2ase_major_dom"/>
</dbReference>
<dbReference type="InterPro" id="IPR008286">
    <property type="entry name" value="Prn/Lys/Arg_de-COase_C"/>
</dbReference>
<dbReference type="InterPro" id="IPR036633">
    <property type="entry name" value="Prn/Lys/Arg_de-COase_C_sf"/>
</dbReference>
<dbReference type="InterPro" id="IPR015424">
    <property type="entry name" value="PyrdxlP-dep_Trfase"/>
</dbReference>
<dbReference type="InterPro" id="IPR015421">
    <property type="entry name" value="PyrdxlP-dep_Trfase_major"/>
</dbReference>
<dbReference type="InterPro" id="IPR015422">
    <property type="entry name" value="PyrdxlP-dep_Trfase_small"/>
</dbReference>
<dbReference type="NCBIfam" id="NF011928">
    <property type="entry name" value="PRK15399.1"/>
    <property type="match status" value="1"/>
</dbReference>
<dbReference type="NCBIfam" id="NF011929">
    <property type="entry name" value="PRK15400.1"/>
    <property type="match status" value="1"/>
</dbReference>
<dbReference type="PANTHER" id="PTHR45229:SF3">
    <property type="entry name" value="BIODEGRADATIVE ARGININE DECARBOXYLASE"/>
    <property type="match status" value="1"/>
</dbReference>
<dbReference type="PANTHER" id="PTHR45229">
    <property type="entry name" value="CONSTITUTIVE ORNITHINE DECARBOXYLASE"/>
    <property type="match status" value="1"/>
</dbReference>
<dbReference type="Pfam" id="PF01276">
    <property type="entry name" value="OKR_DC_1"/>
    <property type="match status" value="1"/>
</dbReference>
<dbReference type="Pfam" id="PF03711">
    <property type="entry name" value="OKR_DC_1_C"/>
    <property type="match status" value="1"/>
</dbReference>
<dbReference type="Pfam" id="PF03709">
    <property type="entry name" value="OKR_DC_1_N"/>
    <property type="match status" value="1"/>
</dbReference>
<dbReference type="PIRSF" id="PIRSF009393">
    <property type="entry name" value="Orn_decarb"/>
    <property type="match status" value="1"/>
</dbReference>
<dbReference type="SUPFAM" id="SSF55904">
    <property type="entry name" value="Ornithine decarboxylase C-terminal domain"/>
    <property type="match status" value="1"/>
</dbReference>
<dbReference type="SUPFAM" id="SSF53383">
    <property type="entry name" value="PLP-dependent transferases"/>
    <property type="match status" value="1"/>
</dbReference>
<dbReference type="PROSITE" id="PS00703">
    <property type="entry name" value="OKR_DC_1"/>
    <property type="match status" value="1"/>
</dbReference>
<evidence type="ECO:0000269" key="1">
    <source>
    </source>
</evidence>
<evidence type="ECO:0000269" key="2">
    <source>
    </source>
</evidence>
<evidence type="ECO:0000269" key="3">
    <source>
    </source>
</evidence>
<evidence type="ECO:0000305" key="4"/>
<proteinExistence type="evidence at protein level"/>
<name>LDCC_ECOLI</name>
<reference key="1">
    <citation type="journal article" date="1997" name="J. Bacteriol.">
        <title>Characterization of a second lysine decarboxylase isolated from Escherichia coli.</title>
        <authorList>
            <person name="Kikuchi Y."/>
            <person name="Kojima H."/>
            <person name="Tanaka T."/>
            <person name="Takatsuka Y."/>
            <person name="Kamio Y."/>
        </authorList>
    </citation>
    <scope>NUCLEOTIDE SEQUENCE [GENOMIC DNA]</scope>
    <scope>PARTIAL PROTEIN SEQUENCE</scope>
    <scope>CHARACTERIZATION</scope>
    <source>
        <strain>K12 / W3110 / ATCC 27325 / DSM 5911</strain>
    </source>
</reference>
<reference key="2">
    <citation type="journal article" date="1997" name="Genes Genet. Syst.">
        <title>The Escherichia coli ldcC gene encodes another lysine decarboxylase, probably a constitutive enzyme.</title>
        <authorList>
            <person name="Yamamoto Y."/>
            <person name="Miwa Y."/>
            <person name="Miyoshi K."/>
            <person name="Furuyama J."/>
            <person name="Ohmori H."/>
        </authorList>
    </citation>
    <scope>NUCLEOTIDE SEQUENCE [GENOMIC DNA]</scope>
    <scope>PROTEIN SEQUENCE OF 1-40 AND 415-456</scope>
    <scope>FUNCTION</scope>
    <scope>CATALYTIC ACTIVITY</scope>
    <source>
        <strain>K12 / W3110 / ATCC 27325 / DSM 5911</strain>
    </source>
</reference>
<reference key="3">
    <citation type="submission" date="1996-02" db="EMBL/GenBank/DDBJ databases">
        <title>Systematic sequencing of the Escherichia coli genome: analysis of the 4.0 - 6.0 min (189,987 - 281,416bp) region.</title>
        <authorList>
            <person name="Takemoto K."/>
            <person name="Mori H."/>
            <person name="Murayama N."/>
            <person name="Kataoka K."/>
            <person name="Yano M."/>
            <person name="Itoh T."/>
            <person name="Yamamoto Y."/>
            <person name="Inokuchi H."/>
            <person name="Miki T."/>
            <person name="Hatada E."/>
            <person name="Fukuda R."/>
            <person name="Ichihara S."/>
            <person name="Mizuno T."/>
            <person name="Makino K."/>
            <person name="Nakata A."/>
            <person name="Yura T."/>
            <person name="Sampei G."/>
            <person name="Mizobuchi K."/>
        </authorList>
    </citation>
    <scope>NUCLEOTIDE SEQUENCE [LARGE SCALE GENOMIC DNA]</scope>
    <source>
        <strain>K12 / W3110 / ATCC 27325 / DSM 5911</strain>
    </source>
</reference>
<reference key="4">
    <citation type="submission" date="1997-01" db="EMBL/GenBank/DDBJ databases">
        <title>Sequence of minutes 4-25 of Escherichia coli.</title>
        <authorList>
            <person name="Chung E."/>
            <person name="Allen E."/>
            <person name="Araujo R."/>
            <person name="Aparicio A.M."/>
            <person name="Davis K."/>
            <person name="Duncan M."/>
            <person name="Federspiel N."/>
            <person name="Hyman R."/>
            <person name="Kalman S."/>
            <person name="Komp C."/>
            <person name="Kurdi O."/>
            <person name="Lew H."/>
            <person name="Lin D."/>
            <person name="Namath A."/>
            <person name="Oefner P."/>
            <person name="Roberts D."/>
            <person name="Schramm S."/>
            <person name="Davis R.W."/>
        </authorList>
    </citation>
    <scope>NUCLEOTIDE SEQUENCE [LARGE SCALE GENOMIC DNA]</scope>
    <source>
        <strain>K12 / MG1655 / ATCC 47076</strain>
    </source>
</reference>
<reference key="5">
    <citation type="journal article" date="1997" name="Science">
        <title>The complete genome sequence of Escherichia coli K-12.</title>
        <authorList>
            <person name="Blattner F.R."/>
            <person name="Plunkett G. III"/>
            <person name="Bloch C.A."/>
            <person name="Perna N.T."/>
            <person name="Burland V."/>
            <person name="Riley M."/>
            <person name="Collado-Vides J."/>
            <person name="Glasner J.D."/>
            <person name="Rode C.K."/>
            <person name="Mayhew G.F."/>
            <person name="Gregor J."/>
            <person name="Davis N.W."/>
            <person name="Kirkpatrick H.A."/>
            <person name="Goeden M.A."/>
            <person name="Rose D.J."/>
            <person name="Mau B."/>
            <person name="Shao Y."/>
        </authorList>
    </citation>
    <scope>NUCLEOTIDE SEQUENCE [LARGE SCALE GENOMIC DNA]</scope>
    <source>
        <strain>K12 / MG1655 / ATCC 47076</strain>
    </source>
</reference>
<reference key="6">
    <citation type="journal article" date="2006" name="Mol. Syst. Biol.">
        <title>Highly accurate genome sequences of Escherichia coli K-12 strains MG1655 and W3110.</title>
        <authorList>
            <person name="Hayashi K."/>
            <person name="Morooka N."/>
            <person name="Yamamoto Y."/>
            <person name="Fujita K."/>
            <person name="Isono K."/>
            <person name="Choi S."/>
            <person name="Ohtsubo E."/>
            <person name="Baba T."/>
            <person name="Wanner B.L."/>
            <person name="Mori H."/>
            <person name="Horiuchi T."/>
        </authorList>
    </citation>
    <scope>NUCLEOTIDE SEQUENCE [LARGE SCALE GENOMIC DNA]</scope>
    <source>
        <strain>K12 / W3110 / ATCC 27325 / DSM 5911</strain>
    </source>
</reference>
<reference key="7">
    <citation type="journal article" date="1998" name="Mol. Microbiol.">
        <title>An Escherichia coli gene (yaeO) suppresses temperature-sensitive mutations in essential genes by modulating Rho-dependent transcription termination.</title>
        <authorList>
            <person name="Pichoff S."/>
            <person name="Alibaud L."/>
            <person name="Guedant A."/>
            <person name="Castanie M.-P."/>
            <person name="Bouche J.-P."/>
        </authorList>
    </citation>
    <scope>NUCLEOTIDE SEQUENCE [GENOMIC DNA] OF 555-713</scope>
    <source>
        <strain>K12</strain>
    </source>
</reference>
<reference key="8">
    <citation type="journal article" date="1998" name="Biosci. Biotechnol. Biochem.">
        <title>RpoS-dependent expression of the second lysine decarboxylase gene in Escherichia coli.</title>
        <authorList>
            <person name="Kikuchi Y."/>
            <person name="Kurahashi O."/>
            <person name="Nagano T."/>
            <person name="Kamio Y."/>
        </authorList>
    </citation>
    <scope>INDUCTION BY RPOS</scope>
</reference>
<reference key="9">
    <citation type="journal article" date="2016" name="Sci. Rep.">
        <title>Structural insights into the Escherichia coli lysine decarboxylases and molecular determinants of interaction with the AAA+ ATPase RavA.</title>
        <authorList>
            <person name="Kandiah E."/>
            <person name="Carriel D."/>
            <person name="Perard J."/>
            <person name="Malet H."/>
            <person name="Bacia M."/>
            <person name="Liu K."/>
            <person name="Chan S.W."/>
            <person name="Houry W.A."/>
            <person name="Ollagnier de Choudens S."/>
            <person name="Elsen S."/>
            <person name="Gutsche I."/>
        </authorList>
    </citation>
    <scope>STRUCTURE BY ELECTRON MICROSCOPY (5.50 ANGSTROMS) OF 1-710</scope>
    <scope>SUBUNIT</scope>
</reference>